<feature type="chain" id="PRO_1000094642" description="3-dehydroquinate synthase">
    <location>
        <begin position="1"/>
        <end position="355"/>
    </location>
</feature>
<feature type="binding site" evidence="1">
    <location>
        <begin position="71"/>
        <end position="76"/>
    </location>
    <ligand>
        <name>NAD(+)</name>
        <dbReference type="ChEBI" id="CHEBI:57540"/>
    </ligand>
</feature>
<feature type="binding site" evidence="1">
    <location>
        <begin position="105"/>
        <end position="109"/>
    </location>
    <ligand>
        <name>NAD(+)</name>
        <dbReference type="ChEBI" id="CHEBI:57540"/>
    </ligand>
</feature>
<feature type="binding site" evidence="1">
    <location>
        <begin position="129"/>
        <end position="130"/>
    </location>
    <ligand>
        <name>NAD(+)</name>
        <dbReference type="ChEBI" id="CHEBI:57540"/>
    </ligand>
</feature>
<feature type="binding site" evidence="1">
    <location>
        <position position="142"/>
    </location>
    <ligand>
        <name>NAD(+)</name>
        <dbReference type="ChEBI" id="CHEBI:57540"/>
    </ligand>
</feature>
<feature type="binding site" evidence="1">
    <location>
        <position position="151"/>
    </location>
    <ligand>
        <name>NAD(+)</name>
        <dbReference type="ChEBI" id="CHEBI:57540"/>
    </ligand>
</feature>
<feature type="binding site" evidence="1">
    <location>
        <begin position="169"/>
        <end position="172"/>
    </location>
    <ligand>
        <name>NAD(+)</name>
        <dbReference type="ChEBI" id="CHEBI:57540"/>
    </ligand>
</feature>
<feature type="binding site" evidence="1">
    <location>
        <position position="184"/>
    </location>
    <ligand>
        <name>Zn(2+)</name>
        <dbReference type="ChEBI" id="CHEBI:29105"/>
    </ligand>
</feature>
<feature type="binding site" evidence="1">
    <location>
        <position position="246"/>
    </location>
    <ligand>
        <name>Zn(2+)</name>
        <dbReference type="ChEBI" id="CHEBI:29105"/>
    </ligand>
</feature>
<feature type="binding site" evidence="1">
    <location>
        <position position="263"/>
    </location>
    <ligand>
        <name>Zn(2+)</name>
        <dbReference type="ChEBI" id="CHEBI:29105"/>
    </ligand>
</feature>
<evidence type="ECO:0000255" key="1">
    <source>
        <dbReference type="HAMAP-Rule" id="MF_00110"/>
    </source>
</evidence>
<sequence>MKLTVNLPNTPYDILIQRGSLAQTGAWVKELWKPQKIAIITDDHVGSLYRETVQSSLEQAGFETIVFEFPEGEASKNLDTVNQAYEFLVKNGMTRSDGIIALGGGVVGDLAGFVASTYMRGIHFLQIPTSLTAQVDSSIGGKTGVNTPFAKNMVGTFCQPDGVLIDPDTLKTLGKRELIEGMGEVVKYGLIDDVELWETLDQLDGSVESILEHADYIIYHSCEVKRKVVVEDELDNGVRLYLNFGHTIGHAIEATAGYGQVMHGEAVAIGMVQISRAAEKKGLMPAGMTAKIIAMCEKFGLPTTHQPWNVDELYASLTHDKKTRGKTIKLVIVPQLGQAAIHQIPMEEMLEFLQV</sequence>
<accession>A4VVS9</accession>
<keyword id="KW-0028">Amino-acid biosynthesis</keyword>
<keyword id="KW-0057">Aromatic amino acid biosynthesis</keyword>
<keyword id="KW-0170">Cobalt</keyword>
<keyword id="KW-0963">Cytoplasm</keyword>
<keyword id="KW-0456">Lyase</keyword>
<keyword id="KW-0479">Metal-binding</keyword>
<keyword id="KW-0520">NAD</keyword>
<keyword id="KW-0547">Nucleotide-binding</keyword>
<keyword id="KW-0862">Zinc</keyword>
<name>AROB_STRSY</name>
<protein>
    <recommendedName>
        <fullName evidence="1">3-dehydroquinate synthase</fullName>
        <shortName evidence="1">DHQS</shortName>
        <ecNumber evidence="1">4.2.3.4</ecNumber>
    </recommendedName>
</protein>
<gene>
    <name evidence="1" type="primary">aroB</name>
    <name type="ordered locus">SSU05_1252</name>
</gene>
<proteinExistence type="inferred from homology"/>
<dbReference type="EC" id="4.2.3.4" evidence="1"/>
<dbReference type="EMBL" id="CP000407">
    <property type="protein sequence ID" value="ABP90218.1"/>
    <property type="molecule type" value="Genomic_DNA"/>
</dbReference>
<dbReference type="SMR" id="A4VVS9"/>
<dbReference type="STRING" id="391295.SSU05_1252"/>
<dbReference type="KEGG" id="ssu:SSU05_1252"/>
<dbReference type="eggNOG" id="COG0337">
    <property type="taxonomic scope" value="Bacteria"/>
</dbReference>
<dbReference type="HOGENOM" id="CLU_001201_0_1_9"/>
<dbReference type="UniPathway" id="UPA00053">
    <property type="reaction ID" value="UER00085"/>
</dbReference>
<dbReference type="GO" id="GO:0005737">
    <property type="term" value="C:cytoplasm"/>
    <property type="evidence" value="ECO:0007669"/>
    <property type="project" value="UniProtKB-SubCell"/>
</dbReference>
<dbReference type="GO" id="GO:0003856">
    <property type="term" value="F:3-dehydroquinate synthase activity"/>
    <property type="evidence" value="ECO:0007669"/>
    <property type="project" value="UniProtKB-UniRule"/>
</dbReference>
<dbReference type="GO" id="GO:0046872">
    <property type="term" value="F:metal ion binding"/>
    <property type="evidence" value="ECO:0007669"/>
    <property type="project" value="UniProtKB-KW"/>
</dbReference>
<dbReference type="GO" id="GO:0000166">
    <property type="term" value="F:nucleotide binding"/>
    <property type="evidence" value="ECO:0007669"/>
    <property type="project" value="UniProtKB-KW"/>
</dbReference>
<dbReference type="GO" id="GO:0008652">
    <property type="term" value="P:amino acid biosynthetic process"/>
    <property type="evidence" value="ECO:0007669"/>
    <property type="project" value="UniProtKB-KW"/>
</dbReference>
<dbReference type="GO" id="GO:0009073">
    <property type="term" value="P:aromatic amino acid family biosynthetic process"/>
    <property type="evidence" value="ECO:0007669"/>
    <property type="project" value="UniProtKB-KW"/>
</dbReference>
<dbReference type="GO" id="GO:0009423">
    <property type="term" value="P:chorismate biosynthetic process"/>
    <property type="evidence" value="ECO:0007669"/>
    <property type="project" value="UniProtKB-UniRule"/>
</dbReference>
<dbReference type="CDD" id="cd08195">
    <property type="entry name" value="DHQS"/>
    <property type="match status" value="1"/>
</dbReference>
<dbReference type="FunFam" id="3.40.50.1970:FF:000001">
    <property type="entry name" value="3-dehydroquinate synthase"/>
    <property type="match status" value="1"/>
</dbReference>
<dbReference type="Gene3D" id="3.40.50.1970">
    <property type="match status" value="1"/>
</dbReference>
<dbReference type="Gene3D" id="1.20.1090.10">
    <property type="entry name" value="Dehydroquinate synthase-like - alpha domain"/>
    <property type="match status" value="1"/>
</dbReference>
<dbReference type="HAMAP" id="MF_00110">
    <property type="entry name" value="DHQ_synthase"/>
    <property type="match status" value="1"/>
</dbReference>
<dbReference type="InterPro" id="IPR050071">
    <property type="entry name" value="Dehydroquinate_synthase"/>
</dbReference>
<dbReference type="InterPro" id="IPR016037">
    <property type="entry name" value="DHQ_synth_AroB"/>
</dbReference>
<dbReference type="InterPro" id="IPR030963">
    <property type="entry name" value="DHQ_synth_fam"/>
</dbReference>
<dbReference type="InterPro" id="IPR030960">
    <property type="entry name" value="DHQS/DOIS_N"/>
</dbReference>
<dbReference type="InterPro" id="IPR056179">
    <property type="entry name" value="DHQS_C"/>
</dbReference>
<dbReference type="NCBIfam" id="TIGR01357">
    <property type="entry name" value="aroB"/>
    <property type="match status" value="1"/>
</dbReference>
<dbReference type="PANTHER" id="PTHR43622">
    <property type="entry name" value="3-DEHYDROQUINATE SYNTHASE"/>
    <property type="match status" value="1"/>
</dbReference>
<dbReference type="PANTHER" id="PTHR43622:SF7">
    <property type="entry name" value="3-DEHYDROQUINATE SYNTHASE, CHLOROPLASTIC"/>
    <property type="match status" value="1"/>
</dbReference>
<dbReference type="Pfam" id="PF01761">
    <property type="entry name" value="DHQ_synthase"/>
    <property type="match status" value="1"/>
</dbReference>
<dbReference type="Pfam" id="PF24621">
    <property type="entry name" value="DHQS_C"/>
    <property type="match status" value="1"/>
</dbReference>
<dbReference type="PIRSF" id="PIRSF001455">
    <property type="entry name" value="DHQ_synth"/>
    <property type="match status" value="1"/>
</dbReference>
<dbReference type="SUPFAM" id="SSF56796">
    <property type="entry name" value="Dehydroquinate synthase-like"/>
    <property type="match status" value="1"/>
</dbReference>
<comment type="function">
    <text evidence="1">Catalyzes the conversion of 3-deoxy-D-arabino-heptulosonate 7-phosphate (DAHP) to dehydroquinate (DHQ).</text>
</comment>
<comment type="catalytic activity">
    <reaction evidence="1">
        <text>7-phospho-2-dehydro-3-deoxy-D-arabino-heptonate = 3-dehydroquinate + phosphate</text>
        <dbReference type="Rhea" id="RHEA:21968"/>
        <dbReference type="ChEBI" id="CHEBI:32364"/>
        <dbReference type="ChEBI" id="CHEBI:43474"/>
        <dbReference type="ChEBI" id="CHEBI:58394"/>
        <dbReference type="EC" id="4.2.3.4"/>
    </reaction>
</comment>
<comment type="cofactor">
    <cofactor evidence="1">
        <name>Co(2+)</name>
        <dbReference type="ChEBI" id="CHEBI:48828"/>
    </cofactor>
    <cofactor evidence="1">
        <name>Zn(2+)</name>
        <dbReference type="ChEBI" id="CHEBI:29105"/>
    </cofactor>
    <text evidence="1">Binds 1 divalent metal cation per subunit. Can use either Co(2+) or Zn(2+).</text>
</comment>
<comment type="cofactor">
    <cofactor evidence="1">
        <name>NAD(+)</name>
        <dbReference type="ChEBI" id="CHEBI:57540"/>
    </cofactor>
</comment>
<comment type="pathway">
    <text evidence="1">Metabolic intermediate biosynthesis; chorismate biosynthesis; chorismate from D-erythrose 4-phosphate and phosphoenolpyruvate: step 2/7.</text>
</comment>
<comment type="subcellular location">
    <subcellularLocation>
        <location evidence="1">Cytoplasm</location>
    </subcellularLocation>
</comment>
<comment type="similarity">
    <text evidence="1">Belongs to the sugar phosphate cyclases superfamily. Dehydroquinate synthase family.</text>
</comment>
<reference key="1">
    <citation type="journal article" date="2007" name="PLoS ONE">
        <title>A glimpse of streptococcal toxic shock syndrome from comparative genomics of S. suis 2 Chinese isolates.</title>
        <authorList>
            <person name="Chen C."/>
            <person name="Tang J."/>
            <person name="Dong W."/>
            <person name="Wang C."/>
            <person name="Feng Y."/>
            <person name="Wang J."/>
            <person name="Zheng F."/>
            <person name="Pan X."/>
            <person name="Liu D."/>
            <person name="Li M."/>
            <person name="Song Y."/>
            <person name="Zhu X."/>
            <person name="Sun H."/>
            <person name="Feng T."/>
            <person name="Guo Z."/>
            <person name="Ju A."/>
            <person name="Ge J."/>
            <person name="Dong Y."/>
            <person name="Sun W."/>
            <person name="Jiang Y."/>
            <person name="Wang J."/>
            <person name="Yan J."/>
            <person name="Yang H."/>
            <person name="Wang X."/>
            <person name="Gao G.F."/>
            <person name="Yang R."/>
            <person name="Wang J."/>
            <person name="Yu J."/>
        </authorList>
    </citation>
    <scope>NUCLEOTIDE SEQUENCE [LARGE SCALE GENOMIC DNA]</scope>
    <source>
        <strain>05ZYH33</strain>
    </source>
</reference>
<organism>
    <name type="scientific">Streptococcus suis (strain 05ZYH33)</name>
    <dbReference type="NCBI Taxonomy" id="391295"/>
    <lineage>
        <taxon>Bacteria</taxon>
        <taxon>Bacillati</taxon>
        <taxon>Bacillota</taxon>
        <taxon>Bacilli</taxon>
        <taxon>Lactobacillales</taxon>
        <taxon>Streptococcaceae</taxon>
        <taxon>Streptococcus</taxon>
    </lineage>
</organism>